<protein>
    <recommendedName>
        <fullName evidence="1">Recombination protein RecR</fullName>
    </recommendedName>
</protein>
<evidence type="ECO:0000255" key="1">
    <source>
        <dbReference type="HAMAP-Rule" id="MF_00017"/>
    </source>
</evidence>
<accession>A1KQ47</accession>
<sequence length="203" mass="22119">MFEGPVQDLIDELGKLPGIGPKSAQRIAFHLLSVEPSDIDRLTGVLAKVRDGVRFCAVCGNVSDNERCRICSDIRRDASVVCIVEEPKDIQAVERTREFRGRYHVLGGALDPLSGIGPDQLRIRELLSRIGERVDDVDVTEVIIATDPNTEGEATATYLVRMLRDIPGLTVTRIASGLPMGGDLEFADELTLGRALAGRRVLA</sequence>
<comment type="function">
    <text evidence="1">May play a role in DNA repair. It seems to be involved in an RecBC-independent recombinational process of DNA repair. It may act with RecF and RecO.</text>
</comment>
<comment type="similarity">
    <text evidence="1">Belongs to the RecR family.</text>
</comment>
<organism>
    <name type="scientific">Mycobacterium bovis (strain BCG / Pasteur 1173P2)</name>
    <dbReference type="NCBI Taxonomy" id="410289"/>
    <lineage>
        <taxon>Bacteria</taxon>
        <taxon>Bacillati</taxon>
        <taxon>Actinomycetota</taxon>
        <taxon>Actinomycetes</taxon>
        <taxon>Mycobacteriales</taxon>
        <taxon>Mycobacteriaceae</taxon>
        <taxon>Mycobacterium</taxon>
        <taxon>Mycobacterium tuberculosis complex</taxon>
    </lineage>
</organism>
<name>RECR_MYCBP</name>
<dbReference type="EMBL" id="AM408590">
    <property type="protein sequence ID" value="CAL73765.1"/>
    <property type="molecule type" value="Genomic_DNA"/>
</dbReference>
<dbReference type="RefSeq" id="WP_003420407.1">
    <property type="nucleotide sequence ID" value="NC_008769.1"/>
</dbReference>
<dbReference type="SMR" id="A1KQ47"/>
<dbReference type="GeneID" id="45427714"/>
<dbReference type="KEGG" id="mbb:BCG_3775c"/>
<dbReference type="HOGENOM" id="CLU_060739_1_0_11"/>
<dbReference type="Proteomes" id="UP000001472">
    <property type="component" value="Chromosome"/>
</dbReference>
<dbReference type="GO" id="GO:0003677">
    <property type="term" value="F:DNA binding"/>
    <property type="evidence" value="ECO:0007669"/>
    <property type="project" value="UniProtKB-UniRule"/>
</dbReference>
<dbReference type="GO" id="GO:0008270">
    <property type="term" value="F:zinc ion binding"/>
    <property type="evidence" value="ECO:0007669"/>
    <property type="project" value="UniProtKB-KW"/>
</dbReference>
<dbReference type="GO" id="GO:0006310">
    <property type="term" value="P:DNA recombination"/>
    <property type="evidence" value="ECO:0007669"/>
    <property type="project" value="UniProtKB-UniRule"/>
</dbReference>
<dbReference type="GO" id="GO:0006281">
    <property type="term" value="P:DNA repair"/>
    <property type="evidence" value="ECO:0007669"/>
    <property type="project" value="UniProtKB-UniRule"/>
</dbReference>
<dbReference type="CDD" id="cd01025">
    <property type="entry name" value="TOPRIM_recR"/>
    <property type="match status" value="1"/>
</dbReference>
<dbReference type="Gene3D" id="3.30.60.80">
    <property type="match status" value="1"/>
</dbReference>
<dbReference type="Gene3D" id="3.40.1360.10">
    <property type="match status" value="1"/>
</dbReference>
<dbReference type="Gene3D" id="6.10.250.240">
    <property type="match status" value="1"/>
</dbReference>
<dbReference type="Gene3D" id="1.10.8.420">
    <property type="entry name" value="RecR Domain 1"/>
    <property type="match status" value="1"/>
</dbReference>
<dbReference type="HAMAP" id="MF_00017">
    <property type="entry name" value="RecR"/>
    <property type="match status" value="1"/>
</dbReference>
<dbReference type="InterPro" id="IPR000093">
    <property type="entry name" value="DNA_Rcmb_RecR"/>
</dbReference>
<dbReference type="InterPro" id="IPR003583">
    <property type="entry name" value="Hlx-hairpin-Hlx_DNA-bd_motif"/>
</dbReference>
<dbReference type="InterPro" id="IPR023627">
    <property type="entry name" value="Rcmb_RecR"/>
</dbReference>
<dbReference type="InterPro" id="IPR015967">
    <property type="entry name" value="Rcmb_RecR_Znf"/>
</dbReference>
<dbReference type="InterPro" id="IPR006171">
    <property type="entry name" value="TOPRIM_dom"/>
</dbReference>
<dbReference type="InterPro" id="IPR034137">
    <property type="entry name" value="TOPRIM_RecR"/>
</dbReference>
<dbReference type="NCBIfam" id="TIGR00615">
    <property type="entry name" value="recR"/>
    <property type="match status" value="1"/>
</dbReference>
<dbReference type="PANTHER" id="PTHR30446">
    <property type="entry name" value="RECOMBINATION PROTEIN RECR"/>
    <property type="match status" value="1"/>
</dbReference>
<dbReference type="PANTHER" id="PTHR30446:SF0">
    <property type="entry name" value="RECOMBINATION PROTEIN RECR"/>
    <property type="match status" value="1"/>
</dbReference>
<dbReference type="Pfam" id="PF21175">
    <property type="entry name" value="RecR_C"/>
    <property type="match status" value="1"/>
</dbReference>
<dbReference type="Pfam" id="PF21176">
    <property type="entry name" value="RecR_HhH"/>
    <property type="match status" value="1"/>
</dbReference>
<dbReference type="Pfam" id="PF02132">
    <property type="entry name" value="RecR_ZnF"/>
    <property type="match status" value="1"/>
</dbReference>
<dbReference type="Pfam" id="PF13662">
    <property type="entry name" value="Toprim_4"/>
    <property type="match status" value="1"/>
</dbReference>
<dbReference type="SMART" id="SM00278">
    <property type="entry name" value="HhH1"/>
    <property type="match status" value="1"/>
</dbReference>
<dbReference type="SMART" id="SM00493">
    <property type="entry name" value="TOPRIM"/>
    <property type="match status" value="1"/>
</dbReference>
<dbReference type="SUPFAM" id="SSF111304">
    <property type="entry name" value="Recombination protein RecR"/>
    <property type="match status" value="1"/>
</dbReference>
<dbReference type="PROSITE" id="PS01300">
    <property type="entry name" value="RECR"/>
    <property type="match status" value="1"/>
</dbReference>
<dbReference type="PROSITE" id="PS50880">
    <property type="entry name" value="TOPRIM"/>
    <property type="match status" value="1"/>
</dbReference>
<gene>
    <name evidence="1" type="primary">recR</name>
    <name type="ordered locus">BCG_3775c</name>
</gene>
<keyword id="KW-0227">DNA damage</keyword>
<keyword id="KW-0233">DNA recombination</keyword>
<keyword id="KW-0234">DNA repair</keyword>
<keyword id="KW-0479">Metal-binding</keyword>
<keyword id="KW-0862">Zinc</keyword>
<keyword id="KW-0863">Zinc-finger</keyword>
<reference key="1">
    <citation type="journal article" date="2007" name="Proc. Natl. Acad. Sci. U.S.A.">
        <title>Genome plasticity of BCG and impact on vaccine efficacy.</title>
        <authorList>
            <person name="Brosch R."/>
            <person name="Gordon S.V."/>
            <person name="Garnier T."/>
            <person name="Eiglmeier K."/>
            <person name="Frigui W."/>
            <person name="Valenti P."/>
            <person name="Dos Santos S."/>
            <person name="Duthoy S."/>
            <person name="Lacroix C."/>
            <person name="Garcia-Pelayo C."/>
            <person name="Inwald J.K."/>
            <person name="Golby P."/>
            <person name="Garcia J.N."/>
            <person name="Hewinson R.G."/>
            <person name="Behr M.A."/>
            <person name="Quail M.A."/>
            <person name="Churcher C."/>
            <person name="Barrell B.G."/>
            <person name="Parkhill J."/>
            <person name="Cole S.T."/>
        </authorList>
    </citation>
    <scope>NUCLEOTIDE SEQUENCE [LARGE SCALE GENOMIC DNA]</scope>
    <source>
        <strain>BCG / Pasteur 1173P2</strain>
    </source>
</reference>
<feature type="chain" id="PRO_0000322911" description="Recombination protein RecR">
    <location>
        <begin position="1"/>
        <end position="203"/>
    </location>
</feature>
<feature type="domain" description="Toprim" evidence="1">
    <location>
        <begin position="79"/>
        <end position="179"/>
    </location>
</feature>
<feature type="zinc finger region" description="C4-type" evidence="1">
    <location>
        <begin position="56"/>
        <end position="71"/>
    </location>
</feature>
<proteinExistence type="inferred from homology"/>